<reference key="1">
    <citation type="journal article" date="2002" name="Proc. Natl. Acad. Sci. U.S.A.">
        <title>Complete genome sequence and comparative genomic analysis of an emerging human pathogen, serotype V Streptococcus agalactiae.</title>
        <authorList>
            <person name="Tettelin H."/>
            <person name="Masignani V."/>
            <person name="Cieslewicz M.J."/>
            <person name="Eisen J.A."/>
            <person name="Peterson S.N."/>
            <person name="Wessels M.R."/>
            <person name="Paulsen I.T."/>
            <person name="Nelson K.E."/>
            <person name="Margarit I."/>
            <person name="Read T.D."/>
            <person name="Madoff L.C."/>
            <person name="Wolf A.M."/>
            <person name="Beanan M.J."/>
            <person name="Brinkac L.M."/>
            <person name="Daugherty S.C."/>
            <person name="DeBoy R.T."/>
            <person name="Durkin A.S."/>
            <person name="Kolonay J.F."/>
            <person name="Madupu R."/>
            <person name="Lewis M.R."/>
            <person name="Radune D."/>
            <person name="Fedorova N.B."/>
            <person name="Scanlan D."/>
            <person name="Khouri H.M."/>
            <person name="Mulligan S."/>
            <person name="Carty H.A."/>
            <person name="Cline R.T."/>
            <person name="Van Aken S.E."/>
            <person name="Gill J."/>
            <person name="Scarselli M."/>
            <person name="Mora M."/>
            <person name="Iacobini E.T."/>
            <person name="Brettoni C."/>
            <person name="Galli G."/>
            <person name="Mariani M."/>
            <person name="Vegni F."/>
            <person name="Maione D."/>
            <person name="Rinaudo D."/>
            <person name="Rappuoli R."/>
            <person name="Telford J.L."/>
            <person name="Kasper D.L."/>
            <person name="Grandi G."/>
            <person name="Fraser C.M."/>
        </authorList>
    </citation>
    <scope>NUCLEOTIDE SEQUENCE [LARGE SCALE GENOMIC DNA]</scope>
    <source>
        <strain>ATCC BAA-611 / 2603 V/R</strain>
    </source>
</reference>
<organism>
    <name type="scientific">Streptococcus agalactiae serotype V (strain ATCC BAA-611 / 2603 V/R)</name>
    <dbReference type="NCBI Taxonomy" id="208435"/>
    <lineage>
        <taxon>Bacteria</taxon>
        <taxon>Bacillati</taxon>
        <taxon>Bacillota</taxon>
        <taxon>Bacilli</taxon>
        <taxon>Lactobacillales</taxon>
        <taxon>Streptococcaceae</taxon>
        <taxon>Streptococcus</taxon>
    </lineage>
</organism>
<feature type="chain" id="PRO_0000171877" description="Putative membrane protein insertion efficiency factor">
    <location>
        <begin position="1"/>
        <end position="83"/>
    </location>
</feature>
<feature type="region of interest" description="Disordered" evidence="2">
    <location>
        <begin position="63"/>
        <end position="83"/>
    </location>
</feature>
<feature type="compositionally biased region" description="Basic and acidic residues" evidence="2">
    <location>
        <begin position="68"/>
        <end position="83"/>
    </location>
</feature>
<proteinExistence type="inferred from homology"/>
<dbReference type="EMBL" id="AE009948">
    <property type="protein sequence ID" value="AAN00456.1"/>
    <property type="molecule type" value="Genomic_DNA"/>
</dbReference>
<dbReference type="RefSeq" id="NP_688583.1">
    <property type="nucleotide sequence ID" value="NC_004116.1"/>
</dbReference>
<dbReference type="STRING" id="208435.SAG1592"/>
<dbReference type="KEGG" id="sag:SAG1592"/>
<dbReference type="PATRIC" id="fig|208435.3.peg.1602"/>
<dbReference type="HOGENOM" id="CLU_144811_5_2_9"/>
<dbReference type="OrthoDB" id="9801753at2"/>
<dbReference type="Proteomes" id="UP000000821">
    <property type="component" value="Chromosome"/>
</dbReference>
<dbReference type="GO" id="GO:0005886">
    <property type="term" value="C:plasma membrane"/>
    <property type="evidence" value="ECO:0007669"/>
    <property type="project" value="UniProtKB-SubCell"/>
</dbReference>
<dbReference type="HAMAP" id="MF_00386">
    <property type="entry name" value="UPF0161_YidD"/>
    <property type="match status" value="1"/>
</dbReference>
<dbReference type="InterPro" id="IPR002696">
    <property type="entry name" value="Membr_insert_effic_factor_YidD"/>
</dbReference>
<dbReference type="NCBIfam" id="TIGR00278">
    <property type="entry name" value="membrane protein insertion efficiency factor YidD"/>
    <property type="match status" value="1"/>
</dbReference>
<dbReference type="PANTHER" id="PTHR33383">
    <property type="entry name" value="MEMBRANE PROTEIN INSERTION EFFICIENCY FACTOR-RELATED"/>
    <property type="match status" value="1"/>
</dbReference>
<dbReference type="PANTHER" id="PTHR33383:SF1">
    <property type="entry name" value="MEMBRANE PROTEIN INSERTION EFFICIENCY FACTOR-RELATED"/>
    <property type="match status" value="1"/>
</dbReference>
<dbReference type="Pfam" id="PF01809">
    <property type="entry name" value="YidD"/>
    <property type="match status" value="1"/>
</dbReference>
<dbReference type="SMART" id="SM01234">
    <property type="entry name" value="Haemolytic"/>
    <property type="match status" value="1"/>
</dbReference>
<gene>
    <name type="ordered locus">SAG1592</name>
</gene>
<sequence>MLKSFLIFLVRFYQKNISPAFPASCRYRPTCSTYMIEAIQKHGLKGVLMGIARILRCHPLAHGGNDPVPDHFSLRRNKTDISD</sequence>
<comment type="function">
    <text evidence="1">Could be involved in insertion of integral membrane proteins into the membrane.</text>
</comment>
<comment type="subcellular location">
    <subcellularLocation>
        <location evidence="1">Cell membrane</location>
        <topology evidence="1">Peripheral membrane protein</topology>
        <orientation evidence="1">Cytoplasmic side</orientation>
    </subcellularLocation>
</comment>
<comment type="similarity">
    <text evidence="1">Belongs to the UPF0161 family.</text>
</comment>
<accession>Q8DY98</accession>
<evidence type="ECO:0000255" key="1">
    <source>
        <dbReference type="HAMAP-Rule" id="MF_00386"/>
    </source>
</evidence>
<evidence type="ECO:0000256" key="2">
    <source>
        <dbReference type="SAM" id="MobiDB-lite"/>
    </source>
</evidence>
<keyword id="KW-1003">Cell membrane</keyword>
<keyword id="KW-0472">Membrane</keyword>
<keyword id="KW-1185">Reference proteome</keyword>
<name>YIDD_STRA5</name>
<protein>
    <recommendedName>
        <fullName evidence="1">Putative membrane protein insertion efficiency factor</fullName>
    </recommendedName>
</protein>